<proteinExistence type="inferred from homology"/>
<dbReference type="EC" id="1.2.1.38" evidence="1"/>
<dbReference type="EMBL" id="AE005673">
    <property type="protein sequence ID" value="AAK23359.1"/>
    <property type="molecule type" value="Genomic_DNA"/>
</dbReference>
<dbReference type="PIR" id="C87420">
    <property type="entry name" value="C87420"/>
</dbReference>
<dbReference type="RefSeq" id="NP_420191.1">
    <property type="nucleotide sequence ID" value="NC_002696.2"/>
</dbReference>
<dbReference type="RefSeq" id="WP_010919254.1">
    <property type="nucleotide sequence ID" value="NC_002696.2"/>
</dbReference>
<dbReference type="SMR" id="Q9A8H5"/>
<dbReference type="STRING" id="190650.CC_1378"/>
<dbReference type="EnsemblBacteria" id="AAK23359">
    <property type="protein sequence ID" value="AAK23359"/>
    <property type="gene ID" value="CC_1378"/>
</dbReference>
<dbReference type="KEGG" id="ccr:CC_1378"/>
<dbReference type="PATRIC" id="fig|190650.5.peg.1408"/>
<dbReference type="eggNOG" id="COG0002">
    <property type="taxonomic scope" value="Bacteria"/>
</dbReference>
<dbReference type="HOGENOM" id="CLU_077118_0_0_5"/>
<dbReference type="BioCyc" id="CAULO:CC1378-MONOMER"/>
<dbReference type="UniPathway" id="UPA00068">
    <property type="reaction ID" value="UER00108"/>
</dbReference>
<dbReference type="Proteomes" id="UP000001816">
    <property type="component" value="Chromosome"/>
</dbReference>
<dbReference type="GO" id="GO:0005737">
    <property type="term" value="C:cytoplasm"/>
    <property type="evidence" value="ECO:0007669"/>
    <property type="project" value="UniProtKB-SubCell"/>
</dbReference>
<dbReference type="GO" id="GO:0003942">
    <property type="term" value="F:N-acetyl-gamma-glutamyl-phosphate reductase activity"/>
    <property type="evidence" value="ECO:0007669"/>
    <property type="project" value="UniProtKB-UniRule"/>
</dbReference>
<dbReference type="GO" id="GO:0051287">
    <property type="term" value="F:NAD binding"/>
    <property type="evidence" value="ECO:0007669"/>
    <property type="project" value="InterPro"/>
</dbReference>
<dbReference type="GO" id="GO:0006526">
    <property type="term" value="P:L-arginine biosynthetic process"/>
    <property type="evidence" value="ECO:0007669"/>
    <property type="project" value="UniProtKB-UniRule"/>
</dbReference>
<dbReference type="CDD" id="cd23935">
    <property type="entry name" value="AGPR_2_C"/>
    <property type="match status" value="1"/>
</dbReference>
<dbReference type="CDD" id="cd17896">
    <property type="entry name" value="AGPR_2_N"/>
    <property type="match status" value="1"/>
</dbReference>
<dbReference type="Gene3D" id="3.30.360.10">
    <property type="entry name" value="Dihydrodipicolinate Reductase, domain 2"/>
    <property type="match status" value="1"/>
</dbReference>
<dbReference type="Gene3D" id="3.40.50.720">
    <property type="entry name" value="NAD(P)-binding Rossmann-like Domain"/>
    <property type="match status" value="1"/>
</dbReference>
<dbReference type="HAMAP" id="MF_01110">
    <property type="entry name" value="ArgC_type2"/>
    <property type="match status" value="1"/>
</dbReference>
<dbReference type="InterPro" id="IPR010136">
    <property type="entry name" value="AGPR_type-2"/>
</dbReference>
<dbReference type="InterPro" id="IPR036291">
    <property type="entry name" value="NAD(P)-bd_dom_sf"/>
</dbReference>
<dbReference type="InterPro" id="IPR050085">
    <property type="entry name" value="NAGSA_dehydrogenase"/>
</dbReference>
<dbReference type="InterPro" id="IPR000534">
    <property type="entry name" value="Semialdehyde_DH_NAD-bd"/>
</dbReference>
<dbReference type="NCBIfam" id="TIGR01851">
    <property type="entry name" value="argC_other"/>
    <property type="match status" value="1"/>
</dbReference>
<dbReference type="PANTHER" id="PTHR32338:SF10">
    <property type="entry name" value="N-ACETYL-GAMMA-GLUTAMYL-PHOSPHATE REDUCTASE, CHLOROPLASTIC-RELATED"/>
    <property type="match status" value="1"/>
</dbReference>
<dbReference type="PANTHER" id="PTHR32338">
    <property type="entry name" value="N-ACETYL-GAMMA-GLUTAMYL-PHOSPHATE REDUCTASE, CHLOROPLASTIC-RELATED-RELATED"/>
    <property type="match status" value="1"/>
</dbReference>
<dbReference type="Pfam" id="PF01118">
    <property type="entry name" value="Semialdhyde_dh"/>
    <property type="match status" value="1"/>
</dbReference>
<dbReference type="Pfam" id="PF22698">
    <property type="entry name" value="Semialdhyde_dhC_1"/>
    <property type="match status" value="1"/>
</dbReference>
<dbReference type="SMART" id="SM00859">
    <property type="entry name" value="Semialdhyde_dh"/>
    <property type="match status" value="1"/>
</dbReference>
<dbReference type="SUPFAM" id="SSF55347">
    <property type="entry name" value="Glyceraldehyde-3-phosphate dehydrogenase-like, C-terminal domain"/>
    <property type="match status" value="1"/>
</dbReference>
<dbReference type="SUPFAM" id="SSF51735">
    <property type="entry name" value="NAD(P)-binding Rossmann-fold domains"/>
    <property type="match status" value="1"/>
</dbReference>
<name>ARGC_CAUVC</name>
<organism>
    <name type="scientific">Caulobacter vibrioides (strain ATCC 19089 / CIP 103742 / CB 15)</name>
    <name type="common">Caulobacter crescentus</name>
    <dbReference type="NCBI Taxonomy" id="190650"/>
    <lineage>
        <taxon>Bacteria</taxon>
        <taxon>Pseudomonadati</taxon>
        <taxon>Pseudomonadota</taxon>
        <taxon>Alphaproteobacteria</taxon>
        <taxon>Caulobacterales</taxon>
        <taxon>Caulobacteraceae</taxon>
        <taxon>Caulobacter</taxon>
    </lineage>
</organism>
<feature type="chain" id="PRO_0000112506" description="N-acetyl-gamma-glutamyl-phosphate reductase">
    <location>
        <begin position="1"/>
        <end position="317"/>
    </location>
</feature>
<feature type="active site" evidence="1">
    <location>
        <position position="118"/>
    </location>
</feature>
<keyword id="KW-0028">Amino-acid biosynthesis</keyword>
<keyword id="KW-0055">Arginine biosynthesis</keyword>
<keyword id="KW-0963">Cytoplasm</keyword>
<keyword id="KW-0521">NADP</keyword>
<keyword id="KW-0560">Oxidoreductase</keyword>
<keyword id="KW-1185">Reference proteome</keyword>
<gene>
    <name evidence="1" type="primary">argC</name>
    <name type="ordered locus">CC_1378</name>
</gene>
<reference key="1">
    <citation type="journal article" date="2001" name="Proc. Natl. Acad. Sci. U.S.A.">
        <title>Complete genome sequence of Caulobacter crescentus.</title>
        <authorList>
            <person name="Nierman W.C."/>
            <person name="Feldblyum T.V."/>
            <person name="Laub M.T."/>
            <person name="Paulsen I.T."/>
            <person name="Nelson K.E."/>
            <person name="Eisen J.A."/>
            <person name="Heidelberg J.F."/>
            <person name="Alley M.R.K."/>
            <person name="Ohta N."/>
            <person name="Maddock J.R."/>
            <person name="Potocka I."/>
            <person name="Nelson W.C."/>
            <person name="Newton A."/>
            <person name="Stephens C."/>
            <person name="Phadke N.D."/>
            <person name="Ely B."/>
            <person name="DeBoy R.T."/>
            <person name="Dodson R.J."/>
            <person name="Durkin A.S."/>
            <person name="Gwinn M.L."/>
            <person name="Haft D.H."/>
            <person name="Kolonay J.F."/>
            <person name="Smit J."/>
            <person name="Craven M.B."/>
            <person name="Khouri H.M."/>
            <person name="Shetty J."/>
            <person name="Berry K.J."/>
            <person name="Utterback T.R."/>
            <person name="Tran K."/>
            <person name="Wolf A.M."/>
            <person name="Vamathevan J.J."/>
            <person name="Ermolaeva M.D."/>
            <person name="White O."/>
            <person name="Salzberg S.L."/>
            <person name="Venter J.C."/>
            <person name="Shapiro L."/>
            <person name="Fraser C.M."/>
        </authorList>
    </citation>
    <scope>NUCLEOTIDE SEQUENCE [LARGE SCALE GENOMIC DNA]</scope>
    <source>
        <strain>ATCC 19089 / CIP 103742 / CB 15</strain>
    </source>
</reference>
<accession>Q9A8H5</accession>
<evidence type="ECO:0000255" key="1">
    <source>
        <dbReference type="HAMAP-Rule" id="MF_01110"/>
    </source>
</evidence>
<comment type="function">
    <text evidence="1">Catalyzes the NADPH-dependent reduction of N-acetyl-5-glutamyl phosphate to yield N-acetyl-L-glutamate 5-semialdehyde.</text>
</comment>
<comment type="catalytic activity">
    <reaction evidence="1">
        <text>N-acetyl-L-glutamate 5-semialdehyde + phosphate + NADP(+) = N-acetyl-L-glutamyl 5-phosphate + NADPH + H(+)</text>
        <dbReference type="Rhea" id="RHEA:21588"/>
        <dbReference type="ChEBI" id="CHEBI:15378"/>
        <dbReference type="ChEBI" id="CHEBI:29123"/>
        <dbReference type="ChEBI" id="CHEBI:43474"/>
        <dbReference type="ChEBI" id="CHEBI:57783"/>
        <dbReference type="ChEBI" id="CHEBI:57936"/>
        <dbReference type="ChEBI" id="CHEBI:58349"/>
        <dbReference type="EC" id="1.2.1.38"/>
    </reaction>
</comment>
<comment type="pathway">
    <text evidence="1">Amino-acid biosynthesis; L-arginine biosynthesis; N(2)-acetyl-L-ornithine from L-glutamate: step 3/4.</text>
</comment>
<comment type="subcellular location">
    <subcellularLocation>
        <location evidence="1">Cytoplasm</location>
    </subcellularLocation>
</comment>
<comment type="similarity">
    <text evidence="1">Belongs to the NAGSA dehydrogenase family. Type 2 subfamily.</text>
</comment>
<protein>
    <recommendedName>
        <fullName evidence="1">N-acetyl-gamma-glutamyl-phosphate reductase</fullName>
        <shortName evidence="1">AGPR</shortName>
        <ecNumber evidence="1">1.2.1.38</ecNumber>
    </recommendedName>
    <alternativeName>
        <fullName evidence="1">N-acetyl-glutamate semialdehyde dehydrogenase</fullName>
        <shortName evidence="1">NAGSA dehydrogenase</shortName>
    </alternativeName>
</protein>
<sequence>MANAPKVFIDGEAGTTGLQIRERLVGRTDLQLISIDPDKRKDADARAEMLNSADAVILCLPDDAAKEAVSLVSNPNTVIIDASTAYRTAEGWAYGFAELDSEQRGKIAASKRISNPGCYPTGAIALTRPLVSAGILPAELPVSYNAVSGYTGGGKAMIAQFEDESAADHTRAPYFIYGLSLSHKHVPEMQKHGGLLTRPIFTPAVGRYAQGMIVEMPLHLSTLNGAPSLADIHAALVKHYKGEAFVEVASLDEAKALTTLDPEGLNGTNRLKLFVFGSDAGGQARLVALLDNLGKGASGAAVQNLNIALGLDEAAGL</sequence>